<protein>
    <recommendedName>
        <fullName evidence="1">UPF0060 membrane protein RPA3838</fullName>
    </recommendedName>
</protein>
<evidence type="ECO:0000255" key="1">
    <source>
        <dbReference type="HAMAP-Rule" id="MF_00010"/>
    </source>
</evidence>
<feature type="chain" id="PRO_0000162342" description="UPF0060 membrane protein RPA3838">
    <location>
        <begin position="1"/>
        <end position="110"/>
    </location>
</feature>
<feature type="transmembrane region" description="Helical" evidence="1">
    <location>
        <begin position="4"/>
        <end position="24"/>
    </location>
</feature>
<feature type="transmembrane region" description="Helical" evidence="1">
    <location>
        <begin position="31"/>
        <end position="51"/>
    </location>
</feature>
<feature type="transmembrane region" description="Helical" evidence="1">
    <location>
        <begin position="59"/>
        <end position="79"/>
    </location>
</feature>
<feature type="transmembrane region" description="Helical" evidence="1">
    <location>
        <begin position="85"/>
        <end position="105"/>
    </location>
</feature>
<proteinExistence type="inferred from homology"/>
<keyword id="KW-0997">Cell inner membrane</keyword>
<keyword id="KW-1003">Cell membrane</keyword>
<keyword id="KW-0472">Membrane</keyword>
<keyword id="KW-0812">Transmembrane</keyword>
<keyword id="KW-1133">Transmembrane helix</keyword>
<organism>
    <name type="scientific">Rhodopseudomonas palustris (strain ATCC BAA-98 / CGA009)</name>
    <dbReference type="NCBI Taxonomy" id="258594"/>
    <lineage>
        <taxon>Bacteria</taxon>
        <taxon>Pseudomonadati</taxon>
        <taxon>Pseudomonadota</taxon>
        <taxon>Alphaproteobacteria</taxon>
        <taxon>Hyphomicrobiales</taxon>
        <taxon>Nitrobacteraceae</taxon>
        <taxon>Rhodopseudomonas</taxon>
    </lineage>
</organism>
<gene>
    <name type="ordered locus">RPA3838</name>
</gene>
<accession>Q6N356</accession>
<comment type="subcellular location">
    <subcellularLocation>
        <location evidence="1">Cell inner membrane</location>
        <topology evidence="1">Multi-pass membrane protein</topology>
    </subcellularLocation>
</comment>
<comment type="similarity">
    <text evidence="1">Belongs to the UPF0060 family.</text>
</comment>
<reference key="1">
    <citation type="journal article" date="2004" name="Nat. Biotechnol.">
        <title>Complete genome sequence of the metabolically versatile photosynthetic bacterium Rhodopseudomonas palustris.</title>
        <authorList>
            <person name="Larimer F.W."/>
            <person name="Chain P."/>
            <person name="Hauser L."/>
            <person name="Lamerdin J.E."/>
            <person name="Malfatti S."/>
            <person name="Do L."/>
            <person name="Land M.L."/>
            <person name="Pelletier D.A."/>
            <person name="Beatty J.T."/>
            <person name="Lang A.S."/>
            <person name="Tabita F.R."/>
            <person name="Gibson J.L."/>
            <person name="Hanson T.E."/>
            <person name="Bobst C."/>
            <person name="Torres y Torres J.L."/>
            <person name="Peres C."/>
            <person name="Harrison F.H."/>
            <person name="Gibson J."/>
            <person name="Harwood C.S."/>
        </authorList>
    </citation>
    <scope>NUCLEOTIDE SEQUENCE [LARGE SCALE GENOMIC DNA]</scope>
    <source>
        <strain>ATCC BAA-98 / CGA009</strain>
    </source>
</reference>
<name>Y3838_RHOPA</name>
<dbReference type="EMBL" id="BX572605">
    <property type="protein sequence ID" value="CAE29279.1"/>
    <property type="molecule type" value="Genomic_DNA"/>
</dbReference>
<dbReference type="RefSeq" id="WP_011159374.1">
    <property type="nucleotide sequence ID" value="NZ_CP116810.1"/>
</dbReference>
<dbReference type="SMR" id="Q6N356"/>
<dbReference type="DNASU" id="2689374"/>
<dbReference type="GeneID" id="66894947"/>
<dbReference type="eggNOG" id="COG1742">
    <property type="taxonomic scope" value="Bacteria"/>
</dbReference>
<dbReference type="HOGENOM" id="CLU_117653_1_0_5"/>
<dbReference type="PhylomeDB" id="Q6N356"/>
<dbReference type="GO" id="GO:0005886">
    <property type="term" value="C:plasma membrane"/>
    <property type="evidence" value="ECO:0007669"/>
    <property type="project" value="UniProtKB-SubCell"/>
</dbReference>
<dbReference type="HAMAP" id="MF_00010">
    <property type="entry name" value="UPF0060"/>
    <property type="match status" value="1"/>
</dbReference>
<dbReference type="InterPro" id="IPR003844">
    <property type="entry name" value="UPF0060"/>
</dbReference>
<dbReference type="NCBIfam" id="NF002586">
    <property type="entry name" value="PRK02237.1"/>
    <property type="match status" value="1"/>
</dbReference>
<dbReference type="PANTHER" id="PTHR36116">
    <property type="entry name" value="UPF0060 MEMBRANE PROTEIN YNFA"/>
    <property type="match status" value="1"/>
</dbReference>
<dbReference type="PANTHER" id="PTHR36116:SF1">
    <property type="entry name" value="UPF0060 MEMBRANE PROTEIN YNFA"/>
    <property type="match status" value="1"/>
</dbReference>
<dbReference type="Pfam" id="PF02694">
    <property type="entry name" value="UPF0060"/>
    <property type="match status" value="1"/>
</dbReference>
<dbReference type="SUPFAM" id="SSF103481">
    <property type="entry name" value="Multidrug resistance efflux transporter EmrE"/>
    <property type="match status" value="1"/>
</dbReference>
<sequence length="110" mass="11839">MTSLLTFCAAALMEIAGCFAFWAWLRLDKSPLWLIPGMLALALFAYLLTLADSPLAGRAYAAYGGIYIASALLWGWAIEGNRPDQWDVIGAAICLVGMSVILFGPRTLPA</sequence>